<organism>
    <name type="scientific">Daboia russelii</name>
    <name type="common">Russel's viper</name>
    <name type="synonym">Vipera russelii</name>
    <dbReference type="NCBI Taxonomy" id="8707"/>
    <lineage>
        <taxon>Eukaryota</taxon>
        <taxon>Metazoa</taxon>
        <taxon>Chordata</taxon>
        <taxon>Craniata</taxon>
        <taxon>Vertebrata</taxon>
        <taxon>Euteleostomi</taxon>
        <taxon>Lepidosauria</taxon>
        <taxon>Squamata</taxon>
        <taxon>Bifurcata</taxon>
        <taxon>Unidentata</taxon>
        <taxon>Episquamata</taxon>
        <taxon>Toxicofera</taxon>
        <taxon>Serpentes</taxon>
        <taxon>Colubroidea</taxon>
        <taxon>Viperidae</taxon>
        <taxon>Viperinae</taxon>
        <taxon>Daboia</taxon>
    </lineage>
</organism>
<keyword id="KW-0903">Direct protein sequencing</keyword>
<keyword id="KW-0472">Membrane</keyword>
<keyword id="KW-0964">Secreted</keyword>
<keyword id="KW-1052">Target cell membrane</keyword>
<keyword id="KW-1053">Target membrane</keyword>
<keyword id="KW-0800">Toxin</keyword>
<accession>P0DMV6</accession>
<name>3SA12_DABRR</name>
<comment type="function">
    <text evidence="2 3">This three-finger cytotoxin shows cytotoxicity and direct nephrotoxicity. The cytotoxicity has been observed on B16F10 melanoma cells (EC(50)=2.56 uM) (PubMed:16997639) and on kidney proximal tubular epithelium LLCPK1 cells (EC(50)=4.79 uM); it is due to necrotic cell death and not to apoptosis. Direct nephrotoxicity has been deduced from binding to LLCPK1 cell line and to kidney membranes. In addition, after intravenous injection into mice tail vein, the toxin principally accumulates in kidney, but only minimally in blood, liver and brain (PubMed:17499831).</text>
</comment>
<comment type="subunit">
    <text evidence="2">Monomer. Homodimerizes during storage at 30 degrees Celsius (observed after 3 days).</text>
</comment>
<comment type="subcellular location">
    <subcellularLocation>
        <location evidence="2">Secreted</location>
    </subcellularLocation>
    <subcellularLocation>
        <location evidence="1">Target cell membrane</location>
    </subcellularLocation>
</comment>
<comment type="tissue specificity">
    <text evidence="6">Expressed by the venom gland.</text>
</comment>
<comment type="mass spectrometry" mass="7201.0" method="Electrospray" evidence="2 3"/>
<comment type="similarity">
    <text evidence="6">Belongs to the three-finger toxin family. Short-chain subfamily. Type IA cytotoxin sub-subfamily.</text>
</comment>
<comment type="caution">
    <text evidence="2">Surprinsingly, this toxin has also been observed to have phospholipase A2 and trypsin inhibitory activities.</text>
</comment>
<reference key="1">
    <citation type="journal article" date="2007" name="J. Chromatogr. B">
        <title>Purification and characterization of a low molecular weight multifunctional cytotoxic phospholipase A2 from Russell's viper venom.</title>
        <authorList>
            <person name="Maity G."/>
            <person name="Mandal S."/>
            <person name="Chatterjee A."/>
            <person name="Bhattacharyya D."/>
        </authorList>
    </citation>
    <scope>PROTEIN SEQUENCE</scope>
    <scope>FUNCTION</scope>
    <scope>SUBUNIT</scope>
    <scope>SUBCELLULAR LOCATION</scope>
    <scope>MASS SPECTROMETRY</scope>
    <source>
        <tissue>Venom</tissue>
    </source>
</reference>
<reference key="2">
    <citation type="journal article" date="2007" name="Toxicon">
        <title>Ability of a small, basic protein isolated from Russell's viper venom (Daboia russelli russelli) to induce renal tubular necrosis in mice.</title>
        <authorList>
            <person name="Mandal S."/>
            <person name="Bhattacharyya D."/>
        </authorList>
    </citation>
    <scope>PROTEIN SEQUENCE OF 1-15</scope>
    <scope>FUNCTION</scope>
    <scope>MASS SPECTROMETRY</scope>
    <source>
        <tissue>Venom</tissue>
    </source>
</reference>
<dbReference type="GO" id="GO:0005576">
    <property type="term" value="C:extracellular region"/>
    <property type="evidence" value="ECO:0007669"/>
    <property type="project" value="UniProtKB-SubCell"/>
</dbReference>
<dbReference type="GO" id="GO:0016020">
    <property type="term" value="C:membrane"/>
    <property type="evidence" value="ECO:0007669"/>
    <property type="project" value="UniProtKB-KW"/>
</dbReference>
<dbReference type="GO" id="GO:0044218">
    <property type="term" value="C:other organism cell membrane"/>
    <property type="evidence" value="ECO:0007669"/>
    <property type="project" value="UniProtKB-KW"/>
</dbReference>
<dbReference type="GO" id="GO:0090729">
    <property type="term" value="F:toxin activity"/>
    <property type="evidence" value="ECO:0007669"/>
    <property type="project" value="UniProtKB-KW"/>
</dbReference>
<feature type="chain" id="PRO_0000433034" description="7.2 kDa cytotoxin RVV-7" evidence="2">
    <location>
        <begin position="1"/>
        <end position="20" status="greater than"/>
    </location>
</feature>
<feature type="unsure residue" description="Assigned by comparison with orthologs" evidence="6">
    <location>
        <position position="14"/>
    </location>
</feature>
<feature type="non-terminal residue">
    <location>
        <position position="20"/>
    </location>
</feature>
<proteinExistence type="evidence at protein level"/>
<protein>
    <recommendedName>
        <fullName evidence="4 5">7.2 kDa cytotoxin RVV-7</fullName>
    </recommendedName>
</protein>
<sequence length="20" mass="2179">LECNKLVDIAYITCPAGKNL</sequence>
<evidence type="ECO:0000250" key="1">
    <source>
        <dbReference type="UniProtKB" id="P60301"/>
    </source>
</evidence>
<evidence type="ECO:0000269" key="2">
    <source>
    </source>
</evidence>
<evidence type="ECO:0000269" key="3">
    <source>
    </source>
</evidence>
<evidence type="ECO:0000303" key="4">
    <source>
    </source>
</evidence>
<evidence type="ECO:0000303" key="5">
    <source>
    </source>
</evidence>
<evidence type="ECO:0000305" key="6"/>